<feature type="chain" id="PRO_0000123556" description="Clustered mitochondria protein homolog">
    <location>
        <begin position="1"/>
        <end position="1173"/>
    </location>
</feature>
<feature type="domain" description="Clu" evidence="2">
    <location>
        <begin position="316"/>
        <end position="565"/>
    </location>
</feature>
<feature type="repeat" description="TPR">
    <location>
        <begin position="984"/>
        <end position="1017"/>
    </location>
</feature>
<feature type="region of interest" description="Disordered" evidence="3">
    <location>
        <begin position="1"/>
        <end position="25"/>
    </location>
</feature>
<feature type="region of interest" description="Disordered" evidence="3">
    <location>
        <begin position="888"/>
        <end position="910"/>
    </location>
</feature>
<feature type="compositionally biased region" description="Low complexity" evidence="3">
    <location>
        <begin position="1"/>
        <end position="21"/>
    </location>
</feature>
<feature type="compositionally biased region" description="Basic residues" evidence="3">
    <location>
        <begin position="890"/>
        <end position="901"/>
    </location>
</feature>
<keyword id="KW-0963">Cytoplasm</keyword>
<keyword id="KW-1185">Reference proteome</keyword>
<keyword id="KW-0677">Repeat</keyword>
<keyword id="KW-0802">TPR repeat</keyword>
<dbReference type="EMBL" id="CU329671">
    <property type="protein sequence ID" value="CAA19172.3"/>
    <property type="molecule type" value="Genomic_DNA"/>
</dbReference>
<dbReference type="PIR" id="T40522">
    <property type="entry name" value="T40522"/>
</dbReference>
<dbReference type="RefSeq" id="NP_595319.2">
    <property type="nucleotide sequence ID" value="NM_001021226.2"/>
</dbReference>
<dbReference type="SMR" id="O59742"/>
<dbReference type="BioGRID" id="277421">
    <property type="interactions" value="13"/>
</dbReference>
<dbReference type="FunCoup" id="O59742">
    <property type="interactions" value="625"/>
</dbReference>
<dbReference type="STRING" id="284812.O59742"/>
<dbReference type="PaxDb" id="4896-SPBC530.06c.1"/>
<dbReference type="EnsemblFungi" id="SPBC530.06c.1">
    <property type="protein sequence ID" value="SPBC530.06c.1:pep"/>
    <property type="gene ID" value="SPBC530.06c"/>
</dbReference>
<dbReference type="GeneID" id="2540905"/>
<dbReference type="KEGG" id="spo:2540905"/>
<dbReference type="PomBase" id="SPBC530.06c">
    <property type="gene designation" value="clu1"/>
</dbReference>
<dbReference type="VEuPathDB" id="FungiDB:SPBC530.06c"/>
<dbReference type="eggNOG" id="KOG1839">
    <property type="taxonomic scope" value="Eukaryota"/>
</dbReference>
<dbReference type="HOGENOM" id="CLU_003256_2_0_1"/>
<dbReference type="InParanoid" id="O59742"/>
<dbReference type="OMA" id="HPVWDKD"/>
<dbReference type="PhylomeDB" id="O59742"/>
<dbReference type="PRO" id="PR:O59742"/>
<dbReference type="Proteomes" id="UP000002485">
    <property type="component" value="Chromosome II"/>
</dbReference>
<dbReference type="GO" id="GO:0005737">
    <property type="term" value="C:cytoplasm"/>
    <property type="evidence" value="ECO:0000318"/>
    <property type="project" value="GO_Central"/>
</dbReference>
<dbReference type="GO" id="GO:0003729">
    <property type="term" value="F:mRNA binding"/>
    <property type="evidence" value="ECO:0000318"/>
    <property type="project" value="GO_Central"/>
</dbReference>
<dbReference type="GO" id="GO:0048312">
    <property type="term" value="P:intracellular distribution of mitochondria"/>
    <property type="evidence" value="ECO:0000318"/>
    <property type="project" value="GO_Central"/>
</dbReference>
<dbReference type="GO" id="GO:0007005">
    <property type="term" value="P:mitochondrion organization"/>
    <property type="evidence" value="ECO:0007669"/>
    <property type="project" value="UniProtKB-UniRule"/>
</dbReference>
<dbReference type="CDD" id="cd15466">
    <property type="entry name" value="CLU-central"/>
    <property type="match status" value="1"/>
</dbReference>
<dbReference type="Gene3D" id="1.25.40.10">
    <property type="entry name" value="Tetratricopeptide repeat domain"/>
    <property type="match status" value="2"/>
</dbReference>
<dbReference type="HAMAP" id="MF_03013">
    <property type="entry name" value="CLU"/>
    <property type="match status" value="1"/>
</dbReference>
<dbReference type="InterPro" id="IPR033646">
    <property type="entry name" value="CLU-central"/>
</dbReference>
<dbReference type="InterPro" id="IPR025697">
    <property type="entry name" value="CLU_dom"/>
</dbReference>
<dbReference type="InterPro" id="IPR028275">
    <property type="entry name" value="CLU_N"/>
</dbReference>
<dbReference type="InterPro" id="IPR027523">
    <property type="entry name" value="CLU_prot"/>
</dbReference>
<dbReference type="InterPro" id="IPR023231">
    <property type="entry name" value="GSKIP_dom_sf"/>
</dbReference>
<dbReference type="InterPro" id="IPR011990">
    <property type="entry name" value="TPR-like_helical_dom_sf"/>
</dbReference>
<dbReference type="InterPro" id="IPR019734">
    <property type="entry name" value="TPR_rpt"/>
</dbReference>
<dbReference type="PANTHER" id="PTHR12601:SF6">
    <property type="entry name" value="CLUSTERED MITOCHONDRIA PROTEIN HOMOLOG"/>
    <property type="match status" value="1"/>
</dbReference>
<dbReference type="PANTHER" id="PTHR12601">
    <property type="entry name" value="EUKARYOTIC TRANSLATION INITIATION FACTOR 3 SUBUNIT EIF-3"/>
    <property type="match status" value="1"/>
</dbReference>
<dbReference type="Pfam" id="PF13236">
    <property type="entry name" value="CLU"/>
    <property type="match status" value="1"/>
</dbReference>
<dbReference type="Pfam" id="PF15044">
    <property type="entry name" value="CLU_N"/>
    <property type="match status" value="1"/>
</dbReference>
<dbReference type="Pfam" id="PF12807">
    <property type="entry name" value="eIF3_p135"/>
    <property type="match status" value="1"/>
</dbReference>
<dbReference type="Pfam" id="PF13374">
    <property type="entry name" value="TPR_10"/>
    <property type="match status" value="1"/>
</dbReference>
<dbReference type="Pfam" id="PF13424">
    <property type="entry name" value="TPR_12"/>
    <property type="match status" value="1"/>
</dbReference>
<dbReference type="SMART" id="SM00028">
    <property type="entry name" value="TPR"/>
    <property type="match status" value="1"/>
</dbReference>
<dbReference type="SUPFAM" id="SSF103107">
    <property type="entry name" value="Hypothetical protein c14orf129, hspc210"/>
    <property type="match status" value="1"/>
</dbReference>
<dbReference type="SUPFAM" id="SSF48452">
    <property type="entry name" value="TPR-like"/>
    <property type="match status" value="1"/>
</dbReference>
<dbReference type="PROSITE" id="PS51823">
    <property type="entry name" value="CLU"/>
    <property type="match status" value="1"/>
</dbReference>
<dbReference type="PROSITE" id="PS50293">
    <property type="entry name" value="TPR_REGION"/>
    <property type="match status" value="1"/>
</dbReference>
<name>CLU_SCHPO</name>
<protein>
    <recommendedName>
        <fullName evidence="1">Clustered mitochondria protein homolog</fullName>
    </recommendedName>
    <alternativeName>
        <fullName evidence="1">Protein TIF31 homolog</fullName>
    </alternativeName>
</protein>
<reference key="1">
    <citation type="journal article" date="2002" name="Nature">
        <title>The genome sequence of Schizosaccharomyces pombe.</title>
        <authorList>
            <person name="Wood V."/>
            <person name="Gwilliam R."/>
            <person name="Rajandream M.A."/>
            <person name="Lyne M.H."/>
            <person name="Lyne R."/>
            <person name="Stewart A."/>
            <person name="Sgouros J.G."/>
            <person name="Peat N."/>
            <person name="Hayles J."/>
            <person name="Baker S.G."/>
            <person name="Basham D."/>
            <person name="Bowman S."/>
            <person name="Brooks K."/>
            <person name="Brown D."/>
            <person name="Brown S."/>
            <person name="Chillingworth T."/>
            <person name="Churcher C.M."/>
            <person name="Collins M."/>
            <person name="Connor R."/>
            <person name="Cronin A."/>
            <person name="Davis P."/>
            <person name="Feltwell T."/>
            <person name="Fraser A."/>
            <person name="Gentles S."/>
            <person name="Goble A."/>
            <person name="Hamlin N."/>
            <person name="Harris D.E."/>
            <person name="Hidalgo J."/>
            <person name="Hodgson G."/>
            <person name="Holroyd S."/>
            <person name="Hornsby T."/>
            <person name="Howarth S."/>
            <person name="Huckle E.J."/>
            <person name="Hunt S."/>
            <person name="Jagels K."/>
            <person name="James K.D."/>
            <person name="Jones L."/>
            <person name="Jones M."/>
            <person name="Leather S."/>
            <person name="McDonald S."/>
            <person name="McLean J."/>
            <person name="Mooney P."/>
            <person name="Moule S."/>
            <person name="Mungall K.L."/>
            <person name="Murphy L.D."/>
            <person name="Niblett D."/>
            <person name="Odell C."/>
            <person name="Oliver K."/>
            <person name="O'Neil S."/>
            <person name="Pearson D."/>
            <person name="Quail M.A."/>
            <person name="Rabbinowitsch E."/>
            <person name="Rutherford K.M."/>
            <person name="Rutter S."/>
            <person name="Saunders D."/>
            <person name="Seeger K."/>
            <person name="Sharp S."/>
            <person name="Skelton J."/>
            <person name="Simmonds M.N."/>
            <person name="Squares R."/>
            <person name="Squares S."/>
            <person name="Stevens K."/>
            <person name="Taylor K."/>
            <person name="Taylor R.G."/>
            <person name="Tivey A."/>
            <person name="Walsh S.V."/>
            <person name="Warren T."/>
            <person name="Whitehead S."/>
            <person name="Woodward J.R."/>
            <person name="Volckaert G."/>
            <person name="Aert R."/>
            <person name="Robben J."/>
            <person name="Grymonprez B."/>
            <person name="Weltjens I."/>
            <person name="Vanstreels E."/>
            <person name="Rieger M."/>
            <person name="Schaefer M."/>
            <person name="Mueller-Auer S."/>
            <person name="Gabel C."/>
            <person name="Fuchs M."/>
            <person name="Duesterhoeft A."/>
            <person name="Fritzc C."/>
            <person name="Holzer E."/>
            <person name="Moestl D."/>
            <person name="Hilbert H."/>
            <person name="Borzym K."/>
            <person name="Langer I."/>
            <person name="Beck A."/>
            <person name="Lehrach H."/>
            <person name="Reinhardt R."/>
            <person name="Pohl T.M."/>
            <person name="Eger P."/>
            <person name="Zimmermann W."/>
            <person name="Wedler H."/>
            <person name="Wambutt R."/>
            <person name="Purnelle B."/>
            <person name="Goffeau A."/>
            <person name="Cadieu E."/>
            <person name="Dreano S."/>
            <person name="Gloux S."/>
            <person name="Lelaure V."/>
            <person name="Mottier S."/>
            <person name="Galibert F."/>
            <person name="Aves S.J."/>
            <person name="Xiang Z."/>
            <person name="Hunt C."/>
            <person name="Moore K."/>
            <person name="Hurst S.M."/>
            <person name="Lucas M."/>
            <person name="Rochet M."/>
            <person name="Gaillardin C."/>
            <person name="Tallada V.A."/>
            <person name="Garzon A."/>
            <person name="Thode G."/>
            <person name="Daga R.R."/>
            <person name="Cruzado L."/>
            <person name="Jimenez J."/>
            <person name="Sanchez M."/>
            <person name="del Rey F."/>
            <person name="Benito J."/>
            <person name="Dominguez A."/>
            <person name="Revuelta J.L."/>
            <person name="Moreno S."/>
            <person name="Armstrong J."/>
            <person name="Forsburg S.L."/>
            <person name="Cerutti L."/>
            <person name="Lowe T."/>
            <person name="McCombie W.R."/>
            <person name="Paulsen I."/>
            <person name="Potashkin J."/>
            <person name="Shpakovski G.V."/>
            <person name="Ussery D."/>
            <person name="Barrell B.G."/>
            <person name="Nurse P."/>
        </authorList>
    </citation>
    <scope>NUCLEOTIDE SEQUENCE [LARGE SCALE GENOMIC DNA]</scope>
    <source>
        <strain>972 / ATCC 24843</strain>
    </source>
</reference>
<organism>
    <name type="scientific">Schizosaccharomyces pombe (strain 972 / ATCC 24843)</name>
    <name type="common">Fission yeast</name>
    <dbReference type="NCBI Taxonomy" id="284812"/>
    <lineage>
        <taxon>Eukaryota</taxon>
        <taxon>Fungi</taxon>
        <taxon>Dikarya</taxon>
        <taxon>Ascomycota</taxon>
        <taxon>Taphrinomycotina</taxon>
        <taxon>Schizosaccharomycetes</taxon>
        <taxon>Schizosaccharomycetales</taxon>
        <taxon>Schizosaccharomycetaceae</taxon>
        <taxon>Schizosaccharomyces</taxon>
    </lineage>
</organism>
<gene>
    <name evidence="1" type="primary">clu1</name>
    <name type="synonym">tif31</name>
    <name type="ORF">SPBC530.06c</name>
</gene>
<comment type="function">
    <text evidence="1">mRNA-binding protein involved in proper cytoplasmic distribution of mitochondria.</text>
</comment>
<comment type="subunit">
    <text evidence="1">May associate with the eukaryotic translation initiation factor 3 (eIF-3) complex.</text>
</comment>
<comment type="subcellular location">
    <subcellularLocation>
        <location evidence="1">Cytoplasm</location>
    </subcellularLocation>
</comment>
<comment type="similarity">
    <text evidence="1">Belongs to the CLU family.</text>
</comment>
<evidence type="ECO:0000255" key="1">
    <source>
        <dbReference type="HAMAP-Rule" id="MF_03013"/>
    </source>
</evidence>
<evidence type="ECO:0000255" key="2">
    <source>
        <dbReference type="PROSITE-ProRule" id="PRU01167"/>
    </source>
</evidence>
<evidence type="ECO:0000256" key="3">
    <source>
        <dbReference type="SAM" id="MobiDB-lite"/>
    </source>
</evidence>
<proteinExistence type="inferred from homology"/>
<sequence length="1173" mass="132313">MSTIDLPTSSLPGSSGDPSGTEMSHSDVDVSVDIDVIFPDHTQTLSFSLLLSNTIHDVRQVILELMLAPPHTCFHLEYKREKLHSFLEIGQIPHLKLSKTRKIVLEVVLDPYTERESKYHIYTLLEFLSRKLPSSSTSPGIRAGFCIFPSLNIPSGENLQIKSSSSLEEINKIPENIVTQSLSYTNLLKKFETSPNPSNNGCFRSLALSGWNPVPAEFVIQGHLLYLTVLTIEGKTYNITSHVSGFYVNNCTSTKFDPSPCDDLQSHSLVLLLEQLSPLFKERLHLSLNDYKSGDAIAQASITGTLPQAPWITFPVPHRADLSRTQKSELFPYIENQGNLRDWNEEIQSTREMDHEDVQDRVLRERLTVKTLQDFTDMAVEGAIDMVNGNIPSLNPLEPTASQMFVHNNIFFSYGRDSVGIFSTKGGDSAAYSAVGKDILAIRLLNQFDLSNPSLLGTCVVDYAGHRVVAQTIVPGIFKQLENGSSHLIYGKVEGESDFRFDESFEGELSRISDLLHIKKHFFVDGKEKSFPLYTSMDAKALKGSDGRTYLMDLYSLFPLDAQFLEVISDEKNEEFPAYPHKLVHVRPELVQLFYEMKLQAFVNANHNAPKKKNLNDSLKSVELEGNGIKLSSEKGKNNVNKVRNDNARFDCGFNPDCFRSDYIFPPDNKELYDKDIENSYALSQYLHAEVIPNFVKSLSEPSSFLPIDGVALCRAMHRSGINIRYLGEIANIILQKSPNNVILLKLVTSEIFIRSIKHVFRNFLAVVPQVLRSHLLSHLLNNLFTVYGYVEPTKPLINENIANLFFQATQVIYSINSTSLYSSIKKEASSRFRFNLTDDLLHSLNPICILRGTCLRLGIQISCKDYFSNKSDDKICEEHAVPNGSTKFTGKKGNKKKRNLGKSQNTTNRQVESEQINIFRPKDILNLMPVIKTCIPYSGLAQESLEACKACLLQGNKELCYNLLNESLSLHEQIYGVLHTEVARAYCQLAMIYHQLEKKEEAVELARKAVIVCERFLGFDSSETSLAYMNLSLYEFSQKNEMQAVMHMQHALKLWYLVFGPDHPNTINSFTNLSLMLHGSEKFIQSQKCLQIAVDLSDKIFGKTTPTASLYLQLAQLMVLNKDSRSALHAVRVAYDILKETLGPDHQNTKEAEHWLSEFTALAVNQERQSRT</sequence>
<accession>O59742</accession>